<name>P5CS_ACTDE</name>
<keyword id="KW-0028">Amino-acid biosynthesis</keyword>
<keyword id="KW-0067">ATP-binding</keyword>
<keyword id="KW-0418">Kinase</keyword>
<keyword id="KW-0511">Multifunctional enzyme</keyword>
<keyword id="KW-0521">NADP</keyword>
<keyword id="KW-0547">Nucleotide-binding</keyword>
<keyword id="KW-0560">Oxidoreductase</keyword>
<keyword id="KW-0641">Proline biosynthesis</keyword>
<keyword id="KW-0808">Transferase</keyword>
<comment type="function">
    <text>P5CS plays a key role in proline biosynthesis, leading to osmoregulation in plants.</text>
</comment>
<comment type="catalytic activity">
    <reaction>
        <text>L-glutamate + ATP = L-glutamyl 5-phosphate + ADP</text>
        <dbReference type="Rhea" id="RHEA:14877"/>
        <dbReference type="ChEBI" id="CHEBI:29985"/>
        <dbReference type="ChEBI" id="CHEBI:30616"/>
        <dbReference type="ChEBI" id="CHEBI:58274"/>
        <dbReference type="ChEBI" id="CHEBI:456216"/>
        <dbReference type="EC" id="2.7.2.11"/>
    </reaction>
</comment>
<comment type="catalytic activity">
    <reaction>
        <text>L-glutamate 5-semialdehyde + phosphate + NADP(+) = L-glutamyl 5-phosphate + NADPH + H(+)</text>
        <dbReference type="Rhea" id="RHEA:19541"/>
        <dbReference type="ChEBI" id="CHEBI:15378"/>
        <dbReference type="ChEBI" id="CHEBI:43474"/>
        <dbReference type="ChEBI" id="CHEBI:57783"/>
        <dbReference type="ChEBI" id="CHEBI:58066"/>
        <dbReference type="ChEBI" id="CHEBI:58274"/>
        <dbReference type="ChEBI" id="CHEBI:58349"/>
        <dbReference type="EC" id="1.2.1.41"/>
    </reaction>
</comment>
<comment type="activity regulation">
    <text>Feedback regulated by proline.</text>
</comment>
<comment type="pathway">
    <text>Amino-acid biosynthesis; L-proline biosynthesis; L-glutamate 5-semialdehyde from L-glutamate: step 1/2.</text>
</comment>
<comment type="pathway">
    <text>Amino-acid biosynthesis; L-proline biosynthesis; L-glutamate 5-semialdehyde from L-glutamate: step 2/2.</text>
</comment>
<comment type="tissue specificity">
    <text>Expressed at high levels in leaves and is inducible in roots subjected to salt stress.</text>
</comment>
<comment type="similarity">
    <text evidence="2">In the N-terminal section; belongs to the glutamate 5-kinase family.</text>
</comment>
<comment type="similarity">
    <text evidence="2">In the C-terminal section; belongs to the gamma-glutamyl phosphate reductase family.</text>
</comment>
<evidence type="ECO:0000250" key="1"/>
<evidence type="ECO:0000305" key="2"/>
<protein>
    <recommendedName>
        <fullName>Delta-1-pyrroline-5-carboxylate synthase</fullName>
        <shortName>P5CS</shortName>
    </recommendedName>
    <domain>
        <recommendedName>
            <fullName>Glutamate 5-kinase</fullName>
            <shortName>GK</shortName>
            <ecNumber>2.7.2.11</ecNumber>
        </recommendedName>
        <alternativeName>
            <fullName>Gamma-glutamyl kinase</fullName>
        </alternativeName>
    </domain>
    <domain>
        <recommendedName>
            <fullName>Gamma-glutamyl phosphate reductase</fullName>
            <shortName>GPR</shortName>
            <ecNumber>1.2.1.41</ecNumber>
        </recommendedName>
        <alternativeName>
            <fullName>Glutamate-5-semialdehyde dehydrogenase</fullName>
        </alternativeName>
        <alternativeName>
            <fullName>Glutamyl-gamma-semialdehyde dehydrogenase</fullName>
        </alternativeName>
    </domain>
</protein>
<accession>O04015</accession>
<organism>
    <name type="scientific">Actinidia deliciosa</name>
    <name type="common">Kiwi</name>
    <dbReference type="NCBI Taxonomy" id="3627"/>
    <lineage>
        <taxon>Eukaryota</taxon>
        <taxon>Viridiplantae</taxon>
        <taxon>Streptophyta</taxon>
        <taxon>Embryophyta</taxon>
        <taxon>Tracheophyta</taxon>
        <taxon>Spermatophyta</taxon>
        <taxon>Magnoliopsida</taxon>
        <taxon>eudicotyledons</taxon>
        <taxon>Gunneridae</taxon>
        <taxon>Pentapetalae</taxon>
        <taxon>asterids</taxon>
        <taxon>Ericales</taxon>
        <taxon>Actinidiaceae</taxon>
        <taxon>Actinidia</taxon>
    </lineage>
</organism>
<sequence length="717" mass="77440">MDAVDSTRAFVKGVKRVIIKVGTAVVTRADGRLALGRLGALCEQIHELNSQGFEVILVTSGAVGVGRQRLRYRKLVNSSFADLQKPQIELDGKACAAVGQNGLLALYDTLFSQLDVTSAQLLVTDNDFRDPEFRKQLTETVESLLNLKVIPIFNENDAVSTRKAPYEDASGIFWDNDSLAALLALELKADLLVLLSDVEGLYSGPPSDPQSKLIHTYIKEMFEGLITFGDKSRVGRGGMTAKVKAAVYAAHAGIPVVITSGYATNNIIKVLQGERIGTLFHRDAQKWAPVGDVGARDMAVAARESSRRLQAMSPQDRSKILLDVADALEANEKLIRIENEADLAAAQQAGYEKSLISRLALKSGKISSLAKSIRVLANMEEPIGHVLKRTEITDGLVLEKTSSPLGVLLIIFESRPDALVQIASLAIRSGNGLVLKGGKEAKRSNAILHKVITSAIPENVGPRLIGLVTSREEIPDLLKLDDVIDLVIPRGSNKLVSQIKESTKIPVLGHADGICHVYVDKSANMDMAKKVVLDAKTDYPAACNAMETLLVHKDLVQNGCLDELIVELQIKGVVIHGGPRASSLLHIPEARSLHHEYSSLACTIEIVDDVYAAIDHIHRHGSAHTDSIITEDHEVAEIFLRQVDSSSVLHNASTRFSDGARFGLGAEVGISTSRIHARGPVGVEGLLTTRWIARGSGQVVDGDKGIVYTHKDLTSHA</sequence>
<dbReference type="EC" id="2.7.2.11"/>
<dbReference type="EC" id="1.2.1.41"/>
<dbReference type="EMBL" id="U92286">
    <property type="protein sequence ID" value="AAC14481.1"/>
    <property type="molecule type" value="mRNA"/>
</dbReference>
<dbReference type="SMR" id="O04015"/>
<dbReference type="UniPathway" id="UPA00098">
    <property type="reaction ID" value="UER00359"/>
</dbReference>
<dbReference type="UniPathway" id="UPA00098">
    <property type="reaction ID" value="UER00360"/>
</dbReference>
<dbReference type="GO" id="GO:0005737">
    <property type="term" value="C:cytoplasm"/>
    <property type="evidence" value="ECO:0007669"/>
    <property type="project" value="InterPro"/>
</dbReference>
<dbReference type="GO" id="GO:0005524">
    <property type="term" value="F:ATP binding"/>
    <property type="evidence" value="ECO:0007669"/>
    <property type="project" value="UniProtKB-KW"/>
</dbReference>
<dbReference type="GO" id="GO:0004349">
    <property type="term" value="F:glutamate 5-kinase activity"/>
    <property type="evidence" value="ECO:0007669"/>
    <property type="project" value="UniProtKB-EC"/>
</dbReference>
<dbReference type="GO" id="GO:0004350">
    <property type="term" value="F:glutamate-5-semialdehyde dehydrogenase activity"/>
    <property type="evidence" value="ECO:0007669"/>
    <property type="project" value="UniProtKB-EC"/>
</dbReference>
<dbReference type="GO" id="GO:0055129">
    <property type="term" value="P:L-proline biosynthetic process"/>
    <property type="evidence" value="ECO:0007669"/>
    <property type="project" value="UniProtKB-UniPathway"/>
</dbReference>
<dbReference type="CDD" id="cd07079">
    <property type="entry name" value="ALDH_F18-19_ProA-GPR"/>
    <property type="match status" value="1"/>
</dbReference>
<dbReference type="FunFam" id="3.40.1160.10:FF:000013">
    <property type="entry name" value="Delta-1-pyrroline-5-carboxylate synthase"/>
    <property type="match status" value="1"/>
</dbReference>
<dbReference type="FunFam" id="3.40.309.10:FF:000015">
    <property type="entry name" value="Delta-1-pyrroline-5-carboxylate synthase"/>
    <property type="match status" value="1"/>
</dbReference>
<dbReference type="FunFam" id="3.40.605.10:FF:000062">
    <property type="entry name" value="Delta-1-pyrroline-5-carboxylate synthase"/>
    <property type="match status" value="1"/>
</dbReference>
<dbReference type="Gene3D" id="3.40.1160.10">
    <property type="entry name" value="Acetylglutamate kinase-like"/>
    <property type="match status" value="1"/>
</dbReference>
<dbReference type="Gene3D" id="3.40.605.10">
    <property type="entry name" value="Aldehyde Dehydrogenase, Chain A, domain 1"/>
    <property type="match status" value="1"/>
</dbReference>
<dbReference type="Gene3D" id="3.40.309.10">
    <property type="entry name" value="Aldehyde Dehydrogenase, Chain A, domain 2"/>
    <property type="match status" value="1"/>
</dbReference>
<dbReference type="HAMAP" id="MF_00412">
    <property type="entry name" value="ProA"/>
    <property type="match status" value="1"/>
</dbReference>
<dbReference type="HAMAP" id="MF_00456">
    <property type="entry name" value="ProB"/>
    <property type="match status" value="1"/>
</dbReference>
<dbReference type="InterPro" id="IPR036393">
    <property type="entry name" value="AceGlu_kinase-like_sf"/>
</dbReference>
<dbReference type="InterPro" id="IPR016161">
    <property type="entry name" value="Ald_DH/histidinol_DH"/>
</dbReference>
<dbReference type="InterPro" id="IPR016163">
    <property type="entry name" value="Ald_DH_C"/>
</dbReference>
<dbReference type="InterPro" id="IPR016162">
    <property type="entry name" value="Ald_DH_N"/>
</dbReference>
<dbReference type="InterPro" id="IPR015590">
    <property type="entry name" value="Aldehyde_DH_dom"/>
</dbReference>
<dbReference type="InterPro" id="IPR001048">
    <property type="entry name" value="Asp/Glu/Uridylate_kinase"/>
</dbReference>
<dbReference type="InterPro" id="IPR020593">
    <property type="entry name" value="G-glutamylP_reductase_CS"/>
</dbReference>
<dbReference type="InterPro" id="IPR001057">
    <property type="entry name" value="Glu/AcGlu_kinase"/>
</dbReference>
<dbReference type="InterPro" id="IPR005715">
    <property type="entry name" value="Glu_5kinase/COase_Synthase"/>
</dbReference>
<dbReference type="InterPro" id="IPR019797">
    <property type="entry name" value="Glutamate_5-kinase_CS"/>
</dbReference>
<dbReference type="InterPro" id="IPR000965">
    <property type="entry name" value="GPR_dom"/>
</dbReference>
<dbReference type="InterPro" id="IPR005766">
    <property type="entry name" value="P5_carboxy_syn"/>
</dbReference>
<dbReference type="NCBIfam" id="TIGR01092">
    <property type="entry name" value="P5CS"/>
    <property type="match status" value="1"/>
</dbReference>
<dbReference type="NCBIfam" id="NF001221">
    <property type="entry name" value="PRK00197.1"/>
    <property type="match status" value="1"/>
</dbReference>
<dbReference type="NCBIfam" id="TIGR00407">
    <property type="entry name" value="proA"/>
    <property type="match status" value="1"/>
</dbReference>
<dbReference type="NCBIfam" id="TIGR01027">
    <property type="entry name" value="proB"/>
    <property type="match status" value="1"/>
</dbReference>
<dbReference type="PANTHER" id="PTHR11063:SF8">
    <property type="entry name" value="DELTA-1-PYRROLINE-5-CARBOXYLATE SYNTHASE"/>
    <property type="match status" value="1"/>
</dbReference>
<dbReference type="PANTHER" id="PTHR11063">
    <property type="entry name" value="GLUTAMATE SEMIALDEHYDE DEHYDROGENASE"/>
    <property type="match status" value="1"/>
</dbReference>
<dbReference type="Pfam" id="PF00696">
    <property type="entry name" value="AA_kinase"/>
    <property type="match status" value="1"/>
</dbReference>
<dbReference type="Pfam" id="PF00171">
    <property type="entry name" value="Aldedh"/>
    <property type="match status" value="1"/>
</dbReference>
<dbReference type="PIRSF" id="PIRSF036429">
    <property type="entry name" value="P5C_syn"/>
    <property type="match status" value="1"/>
</dbReference>
<dbReference type="PRINTS" id="PR00474">
    <property type="entry name" value="GLU5KINASE"/>
</dbReference>
<dbReference type="SUPFAM" id="SSF53720">
    <property type="entry name" value="ALDH-like"/>
    <property type="match status" value="1"/>
</dbReference>
<dbReference type="SUPFAM" id="SSF53633">
    <property type="entry name" value="Carbamate kinase-like"/>
    <property type="match status" value="1"/>
</dbReference>
<dbReference type="PROSITE" id="PS00902">
    <property type="entry name" value="GLUTAMATE_5_KINASE"/>
    <property type="match status" value="1"/>
</dbReference>
<dbReference type="PROSITE" id="PS01223">
    <property type="entry name" value="PROA"/>
    <property type="match status" value="1"/>
</dbReference>
<feature type="chain" id="PRO_0000109774" description="Delta-1-pyrroline-5-carboxylate synthase">
    <location>
        <begin position="1"/>
        <end position="717"/>
    </location>
</feature>
<feature type="region of interest" description="Glutamate 5-kinase">
    <location>
        <begin position="1"/>
        <end position="296"/>
    </location>
</feature>
<feature type="region of interest" description="Gamma-glutamyl phosphate reductase">
    <location>
        <begin position="297"/>
        <end position="717"/>
    </location>
</feature>
<feature type="binding site" evidence="1">
    <location>
        <position position="60"/>
    </location>
    <ligand>
        <name>substrate</name>
    </ligand>
</feature>
<feature type="binding site" evidence="1">
    <location>
        <position position="157"/>
    </location>
    <ligand>
        <name>substrate</name>
    </ligand>
</feature>
<feature type="binding site" evidence="1">
    <location>
        <position position="176"/>
    </location>
    <ligand>
        <name>substrate</name>
    </ligand>
</feature>
<feature type="binding site" evidence="1">
    <location>
        <begin position="196"/>
        <end position="197"/>
    </location>
    <ligand>
        <name>ATP</name>
        <dbReference type="ChEBI" id="CHEBI:30616"/>
    </ligand>
</feature>
<feature type="binding site" evidence="1">
    <location>
        <begin position="236"/>
        <end position="242"/>
    </location>
    <ligand>
        <name>ATP</name>
        <dbReference type="ChEBI" id="CHEBI:30616"/>
    </ligand>
</feature>
<proteinExistence type="evidence at transcript level"/>
<reference key="1">
    <citation type="journal article" date="1998" name="Physiol. Plantarum">
        <title>Regulation of proline accumulation in kiwifruit buds with and without hydrogen cyanamide treatment.</title>
        <authorList>
            <person name="Walton E.F."/>
            <person name="Podivinsky E."/>
            <person name="Wu R.-M."/>
            <person name="Reynolds P.H.S."/>
            <person name="Young L.W."/>
        </authorList>
    </citation>
    <scope>NUCLEOTIDE SEQUENCE [MRNA]</scope>
    <source>
        <tissue>Axillary bud</tissue>
    </source>
</reference>